<evidence type="ECO:0000250" key="1"/>
<evidence type="ECO:0000255" key="2"/>
<evidence type="ECO:0000269" key="3">
    <source>
    </source>
</evidence>
<evidence type="ECO:0000269" key="4">
    <source>
    </source>
</evidence>
<evidence type="ECO:0000269" key="5">
    <source>
    </source>
</evidence>
<evidence type="ECO:0000269" key="6">
    <source>
    </source>
</evidence>
<evidence type="ECO:0000305" key="7"/>
<evidence type="ECO:0007829" key="8">
    <source>
        <dbReference type="PDB" id="3Q08"/>
    </source>
</evidence>
<evidence type="ECO:0007829" key="9">
    <source>
        <dbReference type="PDB" id="3Q09"/>
    </source>
</evidence>
<keyword id="KW-0002">3D-structure</keyword>
<keyword id="KW-0106">Calcium</keyword>
<keyword id="KW-0349">Heme</keyword>
<keyword id="KW-0408">Iron</keyword>
<keyword id="KW-0479">Metal-binding</keyword>
<keyword id="KW-0560">Oxidoreductase</keyword>
<keyword id="KW-0574">Periplasm</keyword>
<keyword id="KW-0732">Signal</keyword>
<gene>
    <name type="ordered locus">Daro_2580</name>
</gene>
<protein>
    <recommendedName>
        <fullName>Chlorite dismutase</fullName>
        <ecNumber>1.13.11.49</ecNumber>
    </recommendedName>
    <alternativeName>
        <fullName>Chlorite O(2)-lyase</fullName>
    </alternativeName>
</protein>
<name>CLD_DECAR</name>
<accession>Q47CX0</accession>
<reference key="1">
    <citation type="journal article" date="2009" name="BMC Genomics">
        <title>Metabolic analysis of the soil microbe Dechloromonas aromatica str. RCB: indications of a surprisingly complex life-style and cryptic anaerobic pathways for aromatic degradation.</title>
        <authorList>
            <person name="Salinero K.K."/>
            <person name="Keller K."/>
            <person name="Feil W.S."/>
            <person name="Feil H."/>
            <person name="Trong S."/>
            <person name="Di Bartolo G."/>
            <person name="Lapidus A."/>
        </authorList>
    </citation>
    <scope>NUCLEOTIDE SEQUENCE [LARGE SCALE GENOMIC DNA]</scope>
    <source>
        <strain>RCB</strain>
    </source>
</reference>
<reference key="2">
    <citation type="journal article" date="2008" name="Biochemistry">
        <title>Chemical and steady-state kinetic analyses of a heterologously expressed heme dependent chlorite dismutase.</title>
        <authorList>
            <person name="Streit B.R."/>
            <person name="DuBois J.L."/>
        </authorList>
    </citation>
    <scope>CATALYTIC ACTIVITY</scope>
    <scope>COFACTOR</scope>
    <scope>BIOPHYSICOCHEMICAL PROPERTIES</scope>
    <scope>FUNCTION</scope>
    <scope>IDENTIFICATION BY MASS SPECTROMETRY</scope>
</reference>
<reference key="3">
    <citation type="journal article" date="2008" name="Proc. Natl. Acad. Sci. U.S.A.">
        <title>Mechanism of and exquisite selectivity for O-O bond formation by the heme-dependent chlorite dismutase.</title>
        <authorList>
            <person name="Lee A.Q."/>
            <person name="Streit B.R."/>
            <person name="Zdilla M.J."/>
            <person name="Abu-Omar M.M."/>
            <person name="DuBois J.L."/>
        </authorList>
    </citation>
    <scope>CATALYTIC ACTIVITY</scope>
</reference>
<reference key="4">
    <citation type="journal article" date="2010" name="J. Am. Chem. Soc.">
        <title>How active-site protonation state influences the reactivity and ligation of the heme in chlorite dismutase.</title>
        <authorList>
            <person name="Streit B.R."/>
            <person name="Blanc B."/>
            <person name="Lukat-Rodgers G.S."/>
            <person name="Rodgers K.R."/>
            <person name="DuBois J.L."/>
        </authorList>
    </citation>
    <scope>BIOPHYSICOCHEMICAL PROPERTIES</scope>
    <scope>ACTIVE SITE</scope>
</reference>
<reference key="5">
    <citation type="journal article" date="2010" name="J. Biol. Inorg. Chem.">
        <title>Structural features promoting dioxygen production by Dechloromonas aromatica chlorite dismutase.</title>
        <authorList>
            <person name="Goblirsch B.R."/>
            <person name="Streit B.R."/>
            <person name="Dubois J.L."/>
            <person name="Wilmot C.M."/>
        </authorList>
    </citation>
    <scope>X-RAY CRYSTALLOGRAPHY (3.00 ANGSTROMS) OF 35-282 IN COMPLEX WITH CALCIUM AND HEME</scope>
    <scope>SUBUNIT</scope>
    <source>
        <strain>RCB</strain>
    </source>
</reference>
<sequence>MTNLSIHNFKLSLVAAVIGSAMVMTSSPVAAQQAMQPMQSMKIERGTILTQPGVFGVFTMFKLRPDWNKVPVAERKGAAEEVKKLIEKHKDNVLVDLYLTRGLETNSDFFFRINAYDLAKAQTFMREFRSTTVGKNADVFETLVGVTKPLNYISKDKSPGLNAGLSSATYSGPAPRYVIVIPVKKNAEWWNMSPEERLKEMEVHTTPTLAYLVNVKRKLYHSTGLDDTDFITYFETDDLTAFNNLMLSLAQVKENKFHVRWGSPTTLGTIHSPEDVIKALAD</sequence>
<comment type="function">
    <text evidence="3">Catalyzes the heme-dependent decomposition of chlorite to O(2) and chloride with high efficiency and specificity. Used to detoxify chlorite, a by-product of the reduction of perchlorate, a primarily anthropogenic pollutant, in perchlorate-respiring bacteria.</text>
</comment>
<comment type="catalytic activity">
    <reaction evidence="3 4">
        <text>chloride + O2 = chlorite</text>
        <dbReference type="Rhea" id="RHEA:21404"/>
        <dbReference type="ChEBI" id="CHEBI:15379"/>
        <dbReference type="ChEBI" id="CHEBI:17441"/>
        <dbReference type="ChEBI" id="CHEBI:17996"/>
        <dbReference type="EC" id="1.13.11.49"/>
    </reaction>
</comment>
<comment type="cofactor">
    <cofactor evidence="3">
        <name>heme b</name>
        <dbReference type="ChEBI" id="CHEBI:60344"/>
    </cofactor>
    <text evidence="3">Binds 1 heme b (iron(II)-protoporphyrin IX) group per monomer.</text>
</comment>
<comment type="biophysicochemical properties">
    <kinetics>
        <KM evidence="3 5">620 uM for chlorite (at 4 degrees Celsius and pH 5.2)</KM>
        <KM evidence="3 5">215 uM for chlorite (at 4 degrees Celsius and pH 6.8)</KM>
        <KM evidence="3 5">430 uM for chlorite (at 4 degrees Celsius and pH 7.6)</KM>
        <text>kcat is 4.53 min(-1) with chlorite as substrate.</text>
    </kinetics>
</comment>
<comment type="subunit">
    <text evidence="6">Homopentamer.</text>
</comment>
<comment type="subcellular location">
    <subcellularLocation>
        <location evidence="1">Periplasm</location>
    </subcellularLocation>
</comment>
<comment type="similarity">
    <text evidence="7">Belongs to the chlorite dismutase family.</text>
</comment>
<proteinExistence type="evidence at protein level"/>
<organism>
    <name type="scientific">Dechloromonas aromatica (strain RCB)</name>
    <dbReference type="NCBI Taxonomy" id="159087"/>
    <lineage>
        <taxon>Bacteria</taxon>
        <taxon>Pseudomonadati</taxon>
        <taxon>Pseudomonadota</taxon>
        <taxon>Betaproteobacteria</taxon>
        <taxon>Rhodocyclales</taxon>
        <taxon>Azonexaceae</taxon>
        <taxon>Dechloromonas</taxon>
    </lineage>
</organism>
<feature type="signal peptide" evidence="2">
    <location>
        <begin position="1"/>
        <end position="31"/>
    </location>
</feature>
<feature type="chain" id="PRO_5000100107" description="Chlorite dismutase">
    <location>
        <begin position="32"/>
        <end position="282"/>
    </location>
</feature>
<feature type="active site" description="Proton acceptor" evidence="5">
    <location>
        <position position="217"/>
    </location>
</feature>
<feature type="binding site" evidence="6">
    <location>
        <position position="104"/>
    </location>
    <ligand>
        <name>Ca(2+)</name>
        <dbReference type="ChEBI" id="CHEBI:29108"/>
    </ligand>
</feature>
<feature type="binding site" description="axial binding residue">
    <location>
        <position position="204"/>
    </location>
    <ligand>
        <name>heme</name>
        <dbReference type="ChEBI" id="CHEBI:30413"/>
    </ligand>
    <ligandPart>
        <name>Fe</name>
        <dbReference type="ChEBI" id="CHEBI:18248"/>
    </ligandPart>
</feature>
<feature type="binding site" evidence="6">
    <location>
        <position position="226"/>
    </location>
    <ligand>
        <name>Ca(2+)</name>
        <dbReference type="ChEBI" id="CHEBI:29108"/>
    </ligand>
</feature>
<feature type="binding site" evidence="6">
    <location>
        <position position="265"/>
    </location>
    <ligand>
        <name>Ca(2+)</name>
        <dbReference type="ChEBI" id="CHEBI:29108"/>
    </ligand>
</feature>
<feature type="helix" evidence="9">
    <location>
        <begin position="45"/>
        <end position="48"/>
    </location>
</feature>
<feature type="strand" evidence="8">
    <location>
        <begin position="51"/>
        <end position="53"/>
    </location>
</feature>
<feature type="strand" evidence="9">
    <location>
        <begin position="55"/>
        <end position="63"/>
    </location>
</feature>
<feature type="helix" evidence="9">
    <location>
        <begin position="65"/>
        <end position="69"/>
    </location>
</feature>
<feature type="turn" evidence="9">
    <location>
        <begin position="72"/>
        <end position="77"/>
    </location>
</feature>
<feature type="helix" evidence="9">
    <location>
        <begin position="78"/>
        <end position="88"/>
    </location>
</feature>
<feature type="turn" evidence="9">
    <location>
        <begin position="89"/>
        <end position="92"/>
    </location>
</feature>
<feature type="strand" evidence="9">
    <location>
        <begin position="93"/>
        <end position="99"/>
    </location>
</feature>
<feature type="turn" evidence="9">
    <location>
        <begin position="101"/>
        <end position="103"/>
    </location>
</feature>
<feature type="strand" evidence="9">
    <location>
        <begin position="108"/>
        <end position="116"/>
    </location>
</feature>
<feature type="helix" evidence="9">
    <location>
        <begin position="118"/>
        <end position="128"/>
    </location>
</feature>
<feature type="helix" evidence="9">
    <location>
        <begin position="132"/>
        <end position="135"/>
    </location>
</feature>
<feature type="strand" evidence="9">
    <location>
        <begin position="137"/>
        <end position="146"/>
    </location>
</feature>
<feature type="strand" evidence="9">
    <location>
        <begin position="151"/>
        <end position="154"/>
    </location>
</feature>
<feature type="turn" evidence="9">
    <location>
        <begin position="155"/>
        <end position="157"/>
    </location>
</feature>
<feature type="helix" evidence="9">
    <location>
        <begin position="159"/>
        <end position="166"/>
    </location>
</feature>
<feature type="strand" evidence="9">
    <location>
        <begin position="177"/>
        <end position="185"/>
    </location>
</feature>
<feature type="helix" evidence="9">
    <location>
        <begin position="187"/>
        <end position="190"/>
    </location>
</feature>
<feature type="helix" evidence="9">
    <location>
        <begin position="194"/>
        <end position="208"/>
    </location>
</feature>
<feature type="helix" evidence="9">
    <location>
        <begin position="209"/>
        <end position="213"/>
    </location>
</feature>
<feature type="strand" evidence="9">
    <location>
        <begin position="215"/>
        <end position="221"/>
    </location>
</feature>
<feature type="strand" evidence="9">
    <location>
        <begin position="226"/>
        <end position="237"/>
    </location>
</feature>
<feature type="helix" evidence="9">
    <location>
        <begin position="239"/>
        <end position="250"/>
    </location>
</feature>
<feature type="helix" evidence="9">
    <location>
        <begin position="253"/>
        <end position="257"/>
    </location>
</feature>
<feature type="strand" evidence="9">
    <location>
        <begin position="258"/>
        <end position="261"/>
    </location>
</feature>
<feature type="strand" evidence="9">
    <location>
        <begin position="266"/>
        <end position="270"/>
    </location>
</feature>
<feature type="helix" evidence="9">
    <location>
        <begin position="273"/>
        <end position="281"/>
    </location>
</feature>
<dbReference type="EC" id="1.13.11.49"/>
<dbReference type="EMBL" id="CP000089">
    <property type="protein sequence ID" value="AAZ47311.1"/>
    <property type="molecule type" value="Genomic_DNA"/>
</dbReference>
<dbReference type="PDB" id="3Q08">
    <property type="method" value="X-ray"/>
    <property type="resolution" value="3.05 A"/>
    <property type="chains" value="A/B/C/D/E/F/G/H/I/J/K/L/M/N/O/P/Q/R/S/T=35-282"/>
</dbReference>
<dbReference type="PDB" id="3Q09">
    <property type="method" value="X-ray"/>
    <property type="resolution" value="3.00 A"/>
    <property type="chains" value="A/B/C/D/E/F/G/H/I/J/K/L/M/N/O/P/Q/R/S/T=35-282"/>
</dbReference>
<dbReference type="PDBsum" id="3Q08"/>
<dbReference type="PDBsum" id="3Q09"/>
<dbReference type="SMR" id="Q47CX0"/>
<dbReference type="STRING" id="159087.Daro_2580"/>
<dbReference type="KEGG" id="dar:Daro_2580"/>
<dbReference type="eggNOG" id="COG3253">
    <property type="taxonomic scope" value="Bacteria"/>
</dbReference>
<dbReference type="HOGENOM" id="CLU_1052467_0_0_4"/>
<dbReference type="OrthoDB" id="212165at2"/>
<dbReference type="BRENDA" id="1.13.11.49">
    <property type="organism ID" value="10828"/>
</dbReference>
<dbReference type="EvolutionaryTrace" id="Q47CX0"/>
<dbReference type="GO" id="GO:0042597">
    <property type="term" value="C:periplasmic space"/>
    <property type="evidence" value="ECO:0000250"/>
    <property type="project" value="UniProtKB"/>
</dbReference>
<dbReference type="GO" id="GO:0050587">
    <property type="term" value="F:chlorite O2-lyase activity"/>
    <property type="evidence" value="ECO:0000314"/>
    <property type="project" value="UniProtKB"/>
</dbReference>
<dbReference type="GO" id="GO:0020037">
    <property type="term" value="F:heme binding"/>
    <property type="evidence" value="ECO:0007669"/>
    <property type="project" value="InterPro"/>
</dbReference>
<dbReference type="GO" id="GO:0046872">
    <property type="term" value="F:metal ion binding"/>
    <property type="evidence" value="ECO:0007669"/>
    <property type="project" value="UniProtKB-KW"/>
</dbReference>
<dbReference type="FunFam" id="3.30.70.3420:FF:000001">
    <property type="entry name" value="Chlorite dismutase"/>
    <property type="match status" value="1"/>
</dbReference>
<dbReference type="Gene3D" id="3.30.70.3420">
    <property type="match status" value="1"/>
</dbReference>
<dbReference type="InterPro" id="IPR010644">
    <property type="entry name" value="ChdC/CLD"/>
</dbReference>
<dbReference type="InterPro" id="IPR011008">
    <property type="entry name" value="Dimeric_a/b-barrel"/>
</dbReference>
<dbReference type="PANTHER" id="PTHR36843:SF1">
    <property type="entry name" value="COPROHEME DECARBOXYLASE"/>
    <property type="match status" value="1"/>
</dbReference>
<dbReference type="PANTHER" id="PTHR36843">
    <property type="entry name" value="HEME-DEPENDENT PEROXIDASE YWFI-RELATED"/>
    <property type="match status" value="1"/>
</dbReference>
<dbReference type="Pfam" id="PF06778">
    <property type="entry name" value="Chlor_dismutase"/>
    <property type="match status" value="1"/>
</dbReference>
<dbReference type="SUPFAM" id="SSF54909">
    <property type="entry name" value="Dimeric alpha+beta barrel"/>
    <property type="match status" value="1"/>
</dbReference>